<name>TKR1_CAEEL</name>
<gene>
    <name type="primary">tkr-1</name>
    <name type="ORF">C38C10.1</name>
</gene>
<reference key="1">
    <citation type="journal article" date="1994" name="Nature">
        <title>2.2 Mb of contiguous nucleotide sequence from chromosome III of C. elegans.</title>
        <authorList>
            <person name="Wilson R."/>
            <person name="Ainscough R."/>
            <person name="Anderson K."/>
            <person name="Baynes C."/>
            <person name="Berks M."/>
            <person name="Bonfield J."/>
            <person name="Burton J."/>
            <person name="Connell M."/>
            <person name="Copsey T."/>
            <person name="Cooper J."/>
            <person name="Coulson A."/>
            <person name="Craxton M."/>
            <person name="Dear S."/>
            <person name="Du Z."/>
            <person name="Durbin R."/>
            <person name="Favello A."/>
            <person name="Fraser A."/>
            <person name="Fulton L."/>
            <person name="Gardner A."/>
            <person name="Green P."/>
            <person name="Hawkins T."/>
            <person name="Hillier L."/>
            <person name="Jier M."/>
            <person name="Johnston L."/>
            <person name="Jones M."/>
            <person name="Kershaw J."/>
            <person name="Kirsten J."/>
            <person name="Laisster N."/>
            <person name="Latreille P."/>
            <person name="Lightning J."/>
            <person name="Lloyd C."/>
            <person name="Mortimore B."/>
            <person name="O'Callaghan M."/>
            <person name="Parsons J."/>
            <person name="Percy C."/>
            <person name="Rifken L."/>
            <person name="Roopra A."/>
            <person name="Saunders D."/>
            <person name="Shownkeen R."/>
            <person name="Sims M."/>
            <person name="Smaldon N."/>
            <person name="Smith A."/>
            <person name="Smith M."/>
            <person name="Sonnhammer E."/>
            <person name="Staden R."/>
            <person name="Sulston J."/>
            <person name="Thierry-Mieg J."/>
            <person name="Thomas K."/>
            <person name="Vaudin M."/>
            <person name="Vaughan K."/>
            <person name="Waterston R."/>
            <person name="Watson A."/>
            <person name="Weinstock L."/>
            <person name="Wilkinson-Sproat J."/>
            <person name="Wohldman P."/>
        </authorList>
    </citation>
    <scope>NUCLEOTIDE SEQUENCE [LARGE SCALE GENOMIC DNA]</scope>
    <source>
        <strain>Bristol N2</strain>
    </source>
</reference>
<reference key="2">
    <citation type="journal article" date="1998" name="Science">
        <title>Genome sequence of the nematode C. elegans: a platform for investigating biology.</title>
        <authorList>
            <consortium name="The C. elegans sequencing consortium"/>
        </authorList>
    </citation>
    <scope>NUCLEOTIDE SEQUENCE [LARGE SCALE GENOMIC DNA]</scope>
    <source>
        <strain>Bristol N2</strain>
    </source>
</reference>
<dbReference type="EMBL" id="Z19153">
    <property type="protein sequence ID" value="CAA79546.2"/>
    <property type="molecule type" value="Genomic_DNA"/>
</dbReference>
<dbReference type="PIR" id="S28285">
    <property type="entry name" value="S28285"/>
</dbReference>
<dbReference type="RefSeq" id="NP_499064.2">
    <property type="nucleotide sequence ID" value="NM_066663.6"/>
</dbReference>
<dbReference type="SMR" id="Q03566"/>
<dbReference type="BioGRID" id="56547">
    <property type="interactions" value="1"/>
</dbReference>
<dbReference type="FunCoup" id="Q03566">
    <property type="interactions" value="119"/>
</dbReference>
<dbReference type="STRING" id="6239.C38C10.1.1"/>
<dbReference type="PaxDb" id="6239-C38C10.1"/>
<dbReference type="EnsemblMetazoa" id="C38C10.1.1">
    <property type="protein sequence ID" value="C38C10.1.1"/>
    <property type="gene ID" value="WBGene00006576"/>
</dbReference>
<dbReference type="GeneID" id="192055"/>
<dbReference type="KEGG" id="cel:CELE_C38C10.1"/>
<dbReference type="AGR" id="WB:WBGene00006576"/>
<dbReference type="CTD" id="192055"/>
<dbReference type="WormBase" id="C38C10.1">
    <property type="protein sequence ID" value="CE44282"/>
    <property type="gene ID" value="WBGene00006576"/>
    <property type="gene designation" value="tkr-1"/>
</dbReference>
<dbReference type="eggNOG" id="KOG4219">
    <property type="taxonomic scope" value="Eukaryota"/>
</dbReference>
<dbReference type="GeneTree" id="ENSGT00940000153745"/>
<dbReference type="HOGENOM" id="CLU_009579_6_1_1"/>
<dbReference type="InParanoid" id="Q03566"/>
<dbReference type="OMA" id="ACKNAEN"/>
<dbReference type="OrthoDB" id="5981855at2759"/>
<dbReference type="PhylomeDB" id="Q03566"/>
<dbReference type="Reactome" id="R-CEL-416476">
    <property type="pathway name" value="G alpha (q) signalling events"/>
</dbReference>
<dbReference type="Reactome" id="R-CEL-8856825">
    <property type="pathway name" value="Cargo recognition for clathrin-mediated endocytosis"/>
</dbReference>
<dbReference type="Reactome" id="R-CEL-8856828">
    <property type="pathway name" value="Clathrin-mediated endocytosis"/>
</dbReference>
<dbReference type="PRO" id="PR:Q03566"/>
<dbReference type="Proteomes" id="UP000001940">
    <property type="component" value="Chromosome III"/>
</dbReference>
<dbReference type="Bgee" id="WBGene00006576">
    <property type="expression patterns" value="Expressed in larva and 1 other cell type or tissue"/>
</dbReference>
<dbReference type="GO" id="GO:0005886">
    <property type="term" value="C:plasma membrane"/>
    <property type="evidence" value="ECO:0000318"/>
    <property type="project" value="GO_Central"/>
</dbReference>
<dbReference type="GO" id="GO:0004995">
    <property type="term" value="F:tachykinin receptor activity"/>
    <property type="evidence" value="ECO:0000318"/>
    <property type="project" value="GO_Central"/>
</dbReference>
<dbReference type="FunFam" id="1.20.1070.10:FF:000565">
    <property type="entry name" value="Probable G-protein coupled receptor tkr-1"/>
    <property type="match status" value="1"/>
</dbReference>
<dbReference type="Gene3D" id="1.20.1070.10">
    <property type="entry name" value="Rhodopsin 7-helix transmembrane proteins"/>
    <property type="match status" value="1"/>
</dbReference>
<dbReference type="InterPro" id="IPR000276">
    <property type="entry name" value="GPCR_Rhodpsn"/>
</dbReference>
<dbReference type="InterPro" id="IPR017452">
    <property type="entry name" value="GPCR_Rhodpsn_7TM"/>
</dbReference>
<dbReference type="InterPro" id="IPR001681">
    <property type="entry name" value="Neurokn_rcpt"/>
</dbReference>
<dbReference type="PANTHER" id="PTHR46925">
    <property type="entry name" value="G-PROTEIN COUPLED RECEPTOR TKR-1-RELATED"/>
    <property type="match status" value="1"/>
</dbReference>
<dbReference type="PANTHER" id="PTHR46925:SF2">
    <property type="entry name" value="G-PROTEIN COUPLED RECEPTOR TKR-1-RELATED"/>
    <property type="match status" value="1"/>
</dbReference>
<dbReference type="Pfam" id="PF00001">
    <property type="entry name" value="7tm_1"/>
    <property type="match status" value="1"/>
</dbReference>
<dbReference type="PRINTS" id="PR00237">
    <property type="entry name" value="GPCRRHODOPSN"/>
</dbReference>
<dbReference type="SUPFAM" id="SSF81321">
    <property type="entry name" value="Family A G protein-coupled receptor-like"/>
    <property type="match status" value="1"/>
</dbReference>
<dbReference type="PROSITE" id="PS00237">
    <property type="entry name" value="G_PROTEIN_RECEP_F1_1"/>
    <property type="match status" value="1"/>
</dbReference>
<dbReference type="PROSITE" id="PS50262">
    <property type="entry name" value="G_PROTEIN_RECEP_F1_2"/>
    <property type="match status" value="1"/>
</dbReference>
<sequence length="406" mass="46350">MNQEFLIQLGERACKNAENLTLPAELEGIFFCAPSSRESLATQVFVAIAFVLLMATAIIGNSVVMWIIYQHKVMHYGFNYFLFNMAFADLLIALFNVGTSWTYNLYYDWWYGDLCTLTSFFGIAPTTVSVCSMMALSWDRCQAVVNPLQKRPLSRKRSVIAILIIWVVSTVTALPFAIAASVNSLYTYDVVTSTVSKAHVCSAPVNTFFEKVLFGIQYALPIIILGSTFTRIAVAFRATNEATDSSLKNNHTRAKSKAVKMLFLMVVAFVVCWLPYHIYHAFALEEFFDAARGKYAYLLIYWIAMSSCAYNPIIYCFANERFRIGFRYVFRWIPVIDCKKEQYEYSQLFPDKMRSMAISLQKGRVNSSCLDKKVKENSSQDLVCVMHSEKNTKKYSKVHLLSCHER</sequence>
<evidence type="ECO:0000255" key="1"/>
<evidence type="ECO:0000255" key="2">
    <source>
        <dbReference type="PROSITE-ProRule" id="PRU00521"/>
    </source>
</evidence>
<evidence type="ECO:0000305" key="3"/>
<accession>Q03566</accession>
<keyword id="KW-1003">Cell membrane</keyword>
<keyword id="KW-0297">G-protein coupled receptor</keyword>
<keyword id="KW-0472">Membrane</keyword>
<keyword id="KW-0675">Receptor</keyword>
<keyword id="KW-1185">Reference proteome</keyword>
<keyword id="KW-0807">Transducer</keyword>
<keyword id="KW-0812">Transmembrane</keyword>
<keyword id="KW-1133">Transmembrane helix</keyword>
<organism>
    <name type="scientific">Caenorhabditis elegans</name>
    <dbReference type="NCBI Taxonomy" id="6239"/>
    <lineage>
        <taxon>Eukaryota</taxon>
        <taxon>Metazoa</taxon>
        <taxon>Ecdysozoa</taxon>
        <taxon>Nematoda</taxon>
        <taxon>Chromadorea</taxon>
        <taxon>Rhabditida</taxon>
        <taxon>Rhabditina</taxon>
        <taxon>Rhabditomorpha</taxon>
        <taxon>Rhabditoidea</taxon>
        <taxon>Rhabditidae</taxon>
        <taxon>Peloderinae</taxon>
        <taxon>Caenorhabditis</taxon>
    </lineage>
</organism>
<protein>
    <recommendedName>
        <fullName>Probable G-protein coupled receptor tkr-1</fullName>
    </recommendedName>
    <alternativeName>
        <fullName>Tachykinin receptor family protein 1</fullName>
    </alternativeName>
</protein>
<proteinExistence type="inferred from homology"/>
<feature type="chain" id="PRO_0000070225" description="Probable G-protein coupled receptor tkr-1">
    <location>
        <begin position="1"/>
        <end position="406"/>
    </location>
</feature>
<feature type="topological domain" description="Extracellular" evidence="1">
    <location>
        <begin position="1"/>
        <end position="47"/>
    </location>
</feature>
<feature type="transmembrane region" description="Helical; Name=1" evidence="1">
    <location>
        <begin position="48"/>
        <end position="68"/>
    </location>
</feature>
<feature type="topological domain" description="Cytoplasmic" evidence="1">
    <location>
        <begin position="69"/>
        <end position="76"/>
    </location>
</feature>
<feature type="transmembrane region" description="Helical; Name=2" evidence="1">
    <location>
        <begin position="77"/>
        <end position="97"/>
    </location>
</feature>
<feature type="topological domain" description="Extracellular" evidence="1">
    <location>
        <begin position="98"/>
        <end position="115"/>
    </location>
</feature>
<feature type="transmembrane region" description="Helical; Name=3" evidence="1">
    <location>
        <begin position="116"/>
        <end position="136"/>
    </location>
</feature>
<feature type="topological domain" description="Cytoplasmic" evidence="1">
    <location>
        <begin position="137"/>
        <end position="158"/>
    </location>
</feature>
<feature type="transmembrane region" description="Helical; Name=4" evidence="1">
    <location>
        <begin position="159"/>
        <end position="179"/>
    </location>
</feature>
<feature type="topological domain" description="Extracellular" evidence="1">
    <location>
        <begin position="180"/>
        <end position="204"/>
    </location>
</feature>
<feature type="transmembrane region" description="Helical; Name=5" evidence="1">
    <location>
        <begin position="205"/>
        <end position="225"/>
    </location>
</feature>
<feature type="topological domain" description="Cytoplasmic" evidence="1">
    <location>
        <begin position="226"/>
        <end position="261"/>
    </location>
</feature>
<feature type="transmembrane region" description="Helical; Name=6" evidence="1">
    <location>
        <begin position="262"/>
        <end position="282"/>
    </location>
</feature>
<feature type="topological domain" description="Extracellular" evidence="1">
    <location>
        <begin position="283"/>
        <end position="297"/>
    </location>
</feature>
<feature type="transmembrane region" description="Helical; Name=7" evidence="1">
    <location>
        <begin position="298"/>
        <end position="318"/>
    </location>
</feature>
<feature type="topological domain" description="Cytoplasmic" evidence="1">
    <location>
        <begin position="319"/>
        <end position="406"/>
    </location>
</feature>
<comment type="function">
    <text>Not known. Putative receptor.</text>
</comment>
<comment type="subcellular location">
    <subcellularLocation>
        <location evidence="3">Cell membrane</location>
        <topology evidence="3">Multi-pass membrane protein</topology>
    </subcellularLocation>
</comment>
<comment type="similarity">
    <text evidence="2">Belongs to the G-protein coupled receptor 1 family.</text>
</comment>